<name>DNAJ_SHEB9</name>
<protein>
    <recommendedName>
        <fullName evidence="1">Chaperone protein DnaJ</fullName>
    </recommendedName>
</protein>
<keyword id="KW-0143">Chaperone</keyword>
<keyword id="KW-0963">Cytoplasm</keyword>
<keyword id="KW-0235">DNA replication</keyword>
<keyword id="KW-0479">Metal-binding</keyword>
<keyword id="KW-0677">Repeat</keyword>
<keyword id="KW-0346">Stress response</keyword>
<keyword id="KW-0862">Zinc</keyword>
<keyword id="KW-0863">Zinc-finger</keyword>
<reference key="1">
    <citation type="submission" date="2007-11" db="EMBL/GenBank/DDBJ databases">
        <title>Complete sequence of chromosome of Shewanella baltica OS195.</title>
        <authorList>
            <consortium name="US DOE Joint Genome Institute"/>
            <person name="Copeland A."/>
            <person name="Lucas S."/>
            <person name="Lapidus A."/>
            <person name="Barry K."/>
            <person name="Glavina del Rio T."/>
            <person name="Dalin E."/>
            <person name="Tice H."/>
            <person name="Pitluck S."/>
            <person name="Chain P."/>
            <person name="Malfatti S."/>
            <person name="Shin M."/>
            <person name="Vergez L."/>
            <person name="Schmutz J."/>
            <person name="Larimer F."/>
            <person name="Land M."/>
            <person name="Hauser L."/>
            <person name="Kyrpides N."/>
            <person name="Kim E."/>
            <person name="Brettar I."/>
            <person name="Rodrigues J."/>
            <person name="Konstantinidis K."/>
            <person name="Klappenbach J."/>
            <person name="Hofle M."/>
            <person name="Tiedje J."/>
            <person name="Richardson P."/>
        </authorList>
    </citation>
    <scope>NUCLEOTIDE SEQUENCE [LARGE SCALE GENOMIC DNA]</scope>
    <source>
        <strain>OS195</strain>
    </source>
</reference>
<sequence>MSKRDYYEVLGVSRDTSEREIKKAYKRLAMKFHPDRNPGDKTAEANFKEIKEAYEILTDADKKAAYDQFGHAGVDPNRGGGGYGGGQGDFGDIFGDVFGDIFGGGRRGGQRQAARGSDLRYNLELSLEEAVKGLTKELRIPTLATCDLCEGSGAKKGTSATTCGTCHGQGQVQMRQGFFAVQQPCPTCHGRGKIIKDPCSKCHGDGRVEKSKTLSVKIPAGVDTGDRIRLAGEGEAGEFGAPPGDLYVQVSVREHAIFVRDGNNLYCEVPISFSKAALGGEIEVPTLDGKVSLKIPAETQTGRMFRLRGKGVKSVRSHAVGDLLCKVVMETPVNLNDRQKELLREFEATLTGESKKHSPKAEGFFDGVKKFFQDLNS</sequence>
<accession>A9L0R7</accession>
<evidence type="ECO:0000255" key="1">
    <source>
        <dbReference type="HAMAP-Rule" id="MF_01152"/>
    </source>
</evidence>
<organism>
    <name type="scientific">Shewanella baltica (strain OS195)</name>
    <dbReference type="NCBI Taxonomy" id="399599"/>
    <lineage>
        <taxon>Bacteria</taxon>
        <taxon>Pseudomonadati</taxon>
        <taxon>Pseudomonadota</taxon>
        <taxon>Gammaproteobacteria</taxon>
        <taxon>Alteromonadales</taxon>
        <taxon>Shewanellaceae</taxon>
        <taxon>Shewanella</taxon>
    </lineage>
</organism>
<feature type="chain" id="PRO_1000085289" description="Chaperone protein DnaJ">
    <location>
        <begin position="1"/>
        <end position="377"/>
    </location>
</feature>
<feature type="domain" description="J" evidence="1">
    <location>
        <begin position="5"/>
        <end position="70"/>
    </location>
</feature>
<feature type="repeat" description="CXXCXGXG motif">
    <location>
        <begin position="146"/>
        <end position="153"/>
    </location>
</feature>
<feature type="repeat" description="CXXCXGXG motif">
    <location>
        <begin position="163"/>
        <end position="170"/>
    </location>
</feature>
<feature type="repeat" description="CXXCXGXG motif">
    <location>
        <begin position="185"/>
        <end position="192"/>
    </location>
</feature>
<feature type="repeat" description="CXXCXGXG motif">
    <location>
        <begin position="199"/>
        <end position="206"/>
    </location>
</feature>
<feature type="zinc finger region" description="CR-type" evidence="1">
    <location>
        <begin position="133"/>
        <end position="211"/>
    </location>
</feature>
<feature type="binding site" evidence="1">
    <location>
        <position position="146"/>
    </location>
    <ligand>
        <name>Zn(2+)</name>
        <dbReference type="ChEBI" id="CHEBI:29105"/>
        <label>1</label>
    </ligand>
</feature>
<feature type="binding site" evidence="1">
    <location>
        <position position="149"/>
    </location>
    <ligand>
        <name>Zn(2+)</name>
        <dbReference type="ChEBI" id="CHEBI:29105"/>
        <label>1</label>
    </ligand>
</feature>
<feature type="binding site" evidence="1">
    <location>
        <position position="163"/>
    </location>
    <ligand>
        <name>Zn(2+)</name>
        <dbReference type="ChEBI" id="CHEBI:29105"/>
        <label>2</label>
    </ligand>
</feature>
<feature type="binding site" evidence="1">
    <location>
        <position position="166"/>
    </location>
    <ligand>
        <name>Zn(2+)</name>
        <dbReference type="ChEBI" id="CHEBI:29105"/>
        <label>2</label>
    </ligand>
</feature>
<feature type="binding site" evidence="1">
    <location>
        <position position="185"/>
    </location>
    <ligand>
        <name>Zn(2+)</name>
        <dbReference type="ChEBI" id="CHEBI:29105"/>
        <label>2</label>
    </ligand>
</feature>
<feature type="binding site" evidence="1">
    <location>
        <position position="188"/>
    </location>
    <ligand>
        <name>Zn(2+)</name>
        <dbReference type="ChEBI" id="CHEBI:29105"/>
        <label>2</label>
    </ligand>
</feature>
<feature type="binding site" evidence="1">
    <location>
        <position position="199"/>
    </location>
    <ligand>
        <name>Zn(2+)</name>
        <dbReference type="ChEBI" id="CHEBI:29105"/>
        <label>1</label>
    </ligand>
</feature>
<feature type="binding site" evidence="1">
    <location>
        <position position="202"/>
    </location>
    <ligand>
        <name>Zn(2+)</name>
        <dbReference type="ChEBI" id="CHEBI:29105"/>
        <label>1</label>
    </ligand>
</feature>
<comment type="function">
    <text evidence="1">Participates actively in the response to hyperosmotic and heat shock by preventing the aggregation of stress-denatured proteins and by disaggregating proteins, also in an autonomous, DnaK-independent fashion. Unfolded proteins bind initially to DnaJ; upon interaction with the DnaJ-bound protein, DnaK hydrolyzes its bound ATP, resulting in the formation of a stable complex. GrpE releases ADP from DnaK; ATP binding to DnaK triggers the release of the substrate protein, thus completing the reaction cycle. Several rounds of ATP-dependent interactions between DnaJ, DnaK and GrpE are required for fully efficient folding. Also involved, together with DnaK and GrpE, in the DNA replication of plasmids through activation of initiation proteins.</text>
</comment>
<comment type="cofactor">
    <cofactor evidence="1">
        <name>Zn(2+)</name>
        <dbReference type="ChEBI" id="CHEBI:29105"/>
    </cofactor>
    <text evidence="1">Binds 2 Zn(2+) ions per monomer.</text>
</comment>
<comment type="subunit">
    <text evidence="1">Homodimer.</text>
</comment>
<comment type="subcellular location">
    <subcellularLocation>
        <location evidence="1">Cytoplasm</location>
    </subcellularLocation>
</comment>
<comment type="domain">
    <text evidence="1">The J domain is necessary and sufficient to stimulate DnaK ATPase activity. Zinc center 1 plays an important role in the autonomous, DnaK-independent chaperone activity of DnaJ. Zinc center 2 is essential for interaction with DnaK and for DnaJ activity.</text>
</comment>
<comment type="similarity">
    <text evidence="1">Belongs to the DnaJ family.</text>
</comment>
<gene>
    <name evidence="1" type="primary">dnaJ</name>
    <name type="ordered locus">Sbal195_3536</name>
</gene>
<proteinExistence type="inferred from homology"/>
<dbReference type="EMBL" id="CP000891">
    <property type="protein sequence ID" value="ABX50698.1"/>
    <property type="molecule type" value="Genomic_DNA"/>
</dbReference>
<dbReference type="RefSeq" id="WP_006083917.1">
    <property type="nucleotide sequence ID" value="NC_009997.1"/>
</dbReference>
<dbReference type="SMR" id="A9L0R7"/>
<dbReference type="GeneID" id="11773576"/>
<dbReference type="KEGG" id="sbn:Sbal195_3536"/>
<dbReference type="HOGENOM" id="CLU_017633_0_7_6"/>
<dbReference type="Proteomes" id="UP000000770">
    <property type="component" value="Chromosome"/>
</dbReference>
<dbReference type="GO" id="GO:0005737">
    <property type="term" value="C:cytoplasm"/>
    <property type="evidence" value="ECO:0007669"/>
    <property type="project" value="UniProtKB-SubCell"/>
</dbReference>
<dbReference type="GO" id="GO:0005524">
    <property type="term" value="F:ATP binding"/>
    <property type="evidence" value="ECO:0007669"/>
    <property type="project" value="InterPro"/>
</dbReference>
<dbReference type="GO" id="GO:0031072">
    <property type="term" value="F:heat shock protein binding"/>
    <property type="evidence" value="ECO:0007669"/>
    <property type="project" value="InterPro"/>
</dbReference>
<dbReference type="GO" id="GO:0051082">
    <property type="term" value="F:unfolded protein binding"/>
    <property type="evidence" value="ECO:0007669"/>
    <property type="project" value="UniProtKB-UniRule"/>
</dbReference>
<dbReference type="GO" id="GO:0008270">
    <property type="term" value="F:zinc ion binding"/>
    <property type="evidence" value="ECO:0007669"/>
    <property type="project" value="UniProtKB-UniRule"/>
</dbReference>
<dbReference type="GO" id="GO:0051085">
    <property type="term" value="P:chaperone cofactor-dependent protein refolding"/>
    <property type="evidence" value="ECO:0007669"/>
    <property type="project" value="TreeGrafter"/>
</dbReference>
<dbReference type="GO" id="GO:0006260">
    <property type="term" value="P:DNA replication"/>
    <property type="evidence" value="ECO:0007669"/>
    <property type="project" value="UniProtKB-KW"/>
</dbReference>
<dbReference type="GO" id="GO:0042026">
    <property type="term" value="P:protein refolding"/>
    <property type="evidence" value="ECO:0007669"/>
    <property type="project" value="TreeGrafter"/>
</dbReference>
<dbReference type="GO" id="GO:0009408">
    <property type="term" value="P:response to heat"/>
    <property type="evidence" value="ECO:0007669"/>
    <property type="project" value="InterPro"/>
</dbReference>
<dbReference type="CDD" id="cd06257">
    <property type="entry name" value="DnaJ"/>
    <property type="match status" value="1"/>
</dbReference>
<dbReference type="CDD" id="cd10747">
    <property type="entry name" value="DnaJ_C"/>
    <property type="match status" value="1"/>
</dbReference>
<dbReference type="CDD" id="cd10719">
    <property type="entry name" value="DnaJ_zf"/>
    <property type="match status" value="1"/>
</dbReference>
<dbReference type="FunFam" id="1.10.287.110:FF:000003">
    <property type="entry name" value="Molecular chaperone DnaJ"/>
    <property type="match status" value="1"/>
</dbReference>
<dbReference type="FunFam" id="2.10.230.10:FF:000002">
    <property type="entry name" value="Molecular chaperone DnaJ"/>
    <property type="match status" value="1"/>
</dbReference>
<dbReference type="FunFam" id="2.60.260.20:FF:000004">
    <property type="entry name" value="Molecular chaperone DnaJ"/>
    <property type="match status" value="1"/>
</dbReference>
<dbReference type="Gene3D" id="1.10.287.110">
    <property type="entry name" value="DnaJ domain"/>
    <property type="match status" value="1"/>
</dbReference>
<dbReference type="Gene3D" id="2.10.230.10">
    <property type="entry name" value="Heat shock protein DnaJ, cysteine-rich domain"/>
    <property type="match status" value="1"/>
</dbReference>
<dbReference type="Gene3D" id="2.60.260.20">
    <property type="entry name" value="Urease metallochaperone UreE, N-terminal domain"/>
    <property type="match status" value="2"/>
</dbReference>
<dbReference type="HAMAP" id="MF_01152">
    <property type="entry name" value="DnaJ"/>
    <property type="match status" value="1"/>
</dbReference>
<dbReference type="InterPro" id="IPR012724">
    <property type="entry name" value="DnaJ"/>
</dbReference>
<dbReference type="InterPro" id="IPR002939">
    <property type="entry name" value="DnaJ_C"/>
</dbReference>
<dbReference type="InterPro" id="IPR001623">
    <property type="entry name" value="DnaJ_domain"/>
</dbReference>
<dbReference type="InterPro" id="IPR018253">
    <property type="entry name" value="DnaJ_domain_CS"/>
</dbReference>
<dbReference type="InterPro" id="IPR008971">
    <property type="entry name" value="HSP40/DnaJ_pept-bd"/>
</dbReference>
<dbReference type="InterPro" id="IPR001305">
    <property type="entry name" value="HSP_DnaJ_Cys-rich_dom"/>
</dbReference>
<dbReference type="InterPro" id="IPR036410">
    <property type="entry name" value="HSP_DnaJ_Cys-rich_dom_sf"/>
</dbReference>
<dbReference type="InterPro" id="IPR036869">
    <property type="entry name" value="J_dom_sf"/>
</dbReference>
<dbReference type="NCBIfam" id="TIGR02349">
    <property type="entry name" value="DnaJ_bact"/>
    <property type="match status" value="1"/>
</dbReference>
<dbReference type="NCBIfam" id="NF008035">
    <property type="entry name" value="PRK10767.1"/>
    <property type="match status" value="1"/>
</dbReference>
<dbReference type="PANTHER" id="PTHR43096:SF48">
    <property type="entry name" value="CHAPERONE PROTEIN DNAJ"/>
    <property type="match status" value="1"/>
</dbReference>
<dbReference type="PANTHER" id="PTHR43096">
    <property type="entry name" value="DNAJ HOMOLOG 1, MITOCHONDRIAL-RELATED"/>
    <property type="match status" value="1"/>
</dbReference>
<dbReference type="Pfam" id="PF00226">
    <property type="entry name" value="DnaJ"/>
    <property type="match status" value="1"/>
</dbReference>
<dbReference type="Pfam" id="PF01556">
    <property type="entry name" value="DnaJ_C"/>
    <property type="match status" value="1"/>
</dbReference>
<dbReference type="Pfam" id="PF00684">
    <property type="entry name" value="DnaJ_CXXCXGXG"/>
    <property type="match status" value="1"/>
</dbReference>
<dbReference type="PRINTS" id="PR00625">
    <property type="entry name" value="JDOMAIN"/>
</dbReference>
<dbReference type="SMART" id="SM00271">
    <property type="entry name" value="DnaJ"/>
    <property type="match status" value="1"/>
</dbReference>
<dbReference type="SUPFAM" id="SSF46565">
    <property type="entry name" value="Chaperone J-domain"/>
    <property type="match status" value="1"/>
</dbReference>
<dbReference type="SUPFAM" id="SSF57938">
    <property type="entry name" value="DnaJ/Hsp40 cysteine-rich domain"/>
    <property type="match status" value="1"/>
</dbReference>
<dbReference type="SUPFAM" id="SSF49493">
    <property type="entry name" value="HSP40/DnaJ peptide-binding domain"/>
    <property type="match status" value="2"/>
</dbReference>
<dbReference type="PROSITE" id="PS00636">
    <property type="entry name" value="DNAJ_1"/>
    <property type="match status" value="1"/>
</dbReference>
<dbReference type="PROSITE" id="PS50076">
    <property type="entry name" value="DNAJ_2"/>
    <property type="match status" value="1"/>
</dbReference>
<dbReference type="PROSITE" id="PS51188">
    <property type="entry name" value="ZF_CR"/>
    <property type="match status" value="1"/>
</dbReference>